<feature type="chain" id="PRO_1000184766" description="ATP synthase subunit delta">
    <location>
        <begin position="1"/>
        <end position="177"/>
    </location>
</feature>
<reference key="1">
    <citation type="journal article" date="2008" name="J. Bacteriol.">
        <title>Complete genome sequence of uropathogenic Proteus mirabilis, a master of both adherence and motility.</title>
        <authorList>
            <person name="Pearson M.M."/>
            <person name="Sebaihia M."/>
            <person name="Churcher C."/>
            <person name="Quail M.A."/>
            <person name="Seshasayee A.S."/>
            <person name="Luscombe N.M."/>
            <person name="Abdellah Z."/>
            <person name="Arrosmith C."/>
            <person name="Atkin B."/>
            <person name="Chillingworth T."/>
            <person name="Hauser H."/>
            <person name="Jagels K."/>
            <person name="Moule S."/>
            <person name="Mungall K."/>
            <person name="Norbertczak H."/>
            <person name="Rabbinowitsch E."/>
            <person name="Walker D."/>
            <person name="Whithead S."/>
            <person name="Thomson N.R."/>
            <person name="Rather P.N."/>
            <person name="Parkhill J."/>
            <person name="Mobley H.L.T."/>
        </authorList>
    </citation>
    <scope>NUCLEOTIDE SEQUENCE [LARGE SCALE GENOMIC DNA]</scope>
    <source>
        <strain>HI4320</strain>
    </source>
</reference>
<comment type="function">
    <text evidence="1">F(1)F(0) ATP synthase produces ATP from ADP in the presence of a proton or sodium gradient. F-type ATPases consist of two structural domains, F(1) containing the extramembraneous catalytic core and F(0) containing the membrane proton channel, linked together by a central stalk and a peripheral stalk. During catalysis, ATP synthesis in the catalytic domain of F(1) is coupled via a rotary mechanism of the central stalk subunits to proton translocation.</text>
</comment>
<comment type="function">
    <text evidence="1">This protein is part of the stalk that links CF(0) to CF(1). It either transmits conformational changes from CF(0) to CF(1) or is implicated in proton conduction.</text>
</comment>
<comment type="subunit">
    <text evidence="1">F-type ATPases have 2 components, F(1) - the catalytic core - and F(0) - the membrane proton channel. F(1) has five subunits: alpha(3), beta(3), gamma(1), delta(1), epsilon(1). F(0) has three main subunits: a(1), b(2) and c(10-14). The alpha and beta chains form an alternating ring which encloses part of the gamma chain. F(1) is attached to F(0) by a central stalk formed by the gamma and epsilon chains, while a peripheral stalk is formed by the delta and b chains.</text>
</comment>
<comment type="subcellular location">
    <subcellularLocation>
        <location evidence="1">Cell inner membrane</location>
        <topology evidence="1">Peripheral membrane protein</topology>
    </subcellularLocation>
</comment>
<comment type="similarity">
    <text evidence="1">Belongs to the ATPase delta chain family.</text>
</comment>
<protein>
    <recommendedName>
        <fullName evidence="1">ATP synthase subunit delta</fullName>
    </recommendedName>
    <alternativeName>
        <fullName evidence="1">ATP synthase F(1) sector subunit delta</fullName>
    </alternativeName>
    <alternativeName>
        <fullName evidence="1">F-type ATPase subunit delta</fullName>
        <shortName evidence="1">F-ATPase subunit delta</shortName>
    </alternativeName>
</protein>
<name>ATPD_PROMH</name>
<proteinExistence type="inferred from homology"/>
<organism>
    <name type="scientific">Proteus mirabilis (strain HI4320)</name>
    <dbReference type="NCBI Taxonomy" id="529507"/>
    <lineage>
        <taxon>Bacteria</taxon>
        <taxon>Pseudomonadati</taxon>
        <taxon>Pseudomonadota</taxon>
        <taxon>Gammaproteobacteria</taxon>
        <taxon>Enterobacterales</taxon>
        <taxon>Morganellaceae</taxon>
        <taxon>Proteus</taxon>
    </lineage>
</organism>
<keyword id="KW-0066">ATP synthesis</keyword>
<keyword id="KW-0997">Cell inner membrane</keyword>
<keyword id="KW-1003">Cell membrane</keyword>
<keyword id="KW-0139">CF(1)</keyword>
<keyword id="KW-0375">Hydrogen ion transport</keyword>
<keyword id="KW-0406">Ion transport</keyword>
<keyword id="KW-0472">Membrane</keyword>
<keyword id="KW-1185">Reference proteome</keyword>
<keyword id="KW-0813">Transport</keyword>
<dbReference type="EMBL" id="AM942759">
    <property type="protein sequence ID" value="CAR46015.1"/>
    <property type="molecule type" value="Genomic_DNA"/>
</dbReference>
<dbReference type="RefSeq" id="WP_004246594.1">
    <property type="nucleotide sequence ID" value="NC_010554.1"/>
</dbReference>
<dbReference type="SMR" id="B4F0E4"/>
<dbReference type="EnsemblBacteria" id="CAR46015">
    <property type="protein sequence ID" value="CAR46015"/>
    <property type="gene ID" value="PMI3061"/>
</dbReference>
<dbReference type="GeneID" id="6803570"/>
<dbReference type="KEGG" id="pmr:PMI3061"/>
<dbReference type="eggNOG" id="COG0712">
    <property type="taxonomic scope" value="Bacteria"/>
</dbReference>
<dbReference type="HOGENOM" id="CLU_085114_3_0_6"/>
<dbReference type="Proteomes" id="UP000008319">
    <property type="component" value="Chromosome"/>
</dbReference>
<dbReference type="GO" id="GO:0005886">
    <property type="term" value="C:plasma membrane"/>
    <property type="evidence" value="ECO:0007669"/>
    <property type="project" value="UniProtKB-SubCell"/>
</dbReference>
<dbReference type="GO" id="GO:0045259">
    <property type="term" value="C:proton-transporting ATP synthase complex"/>
    <property type="evidence" value="ECO:0007669"/>
    <property type="project" value="UniProtKB-KW"/>
</dbReference>
<dbReference type="GO" id="GO:0046933">
    <property type="term" value="F:proton-transporting ATP synthase activity, rotational mechanism"/>
    <property type="evidence" value="ECO:0007669"/>
    <property type="project" value="UniProtKB-UniRule"/>
</dbReference>
<dbReference type="Gene3D" id="1.10.520.20">
    <property type="entry name" value="N-terminal domain of the delta subunit of the F1F0-ATP synthase"/>
    <property type="match status" value="1"/>
</dbReference>
<dbReference type="HAMAP" id="MF_01416">
    <property type="entry name" value="ATP_synth_delta_bact"/>
    <property type="match status" value="1"/>
</dbReference>
<dbReference type="InterPro" id="IPR026015">
    <property type="entry name" value="ATP_synth_OSCP/delta_N_sf"/>
</dbReference>
<dbReference type="InterPro" id="IPR020781">
    <property type="entry name" value="ATPase_OSCP/d_CS"/>
</dbReference>
<dbReference type="InterPro" id="IPR000711">
    <property type="entry name" value="ATPase_OSCP/dsu"/>
</dbReference>
<dbReference type="NCBIfam" id="TIGR01145">
    <property type="entry name" value="ATP_synt_delta"/>
    <property type="match status" value="1"/>
</dbReference>
<dbReference type="NCBIfam" id="NF004402">
    <property type="entry name" value="PRK05758.2-2"/>
    <property type="match status" value="1"/>
</dbReference>
<dbReference type="NCBIfam" id="NF004404">
    <property type="entry name" value="PRK05758.2-5"/>
    <property type="match status" value="1"/>
</dbReference>
<dbReference type="PANTHER" id="PTHR11910">
    <property type="entry name" value="ATP SYNTHASE DELTA CHAIN"/>
    <property type="match status" value="1"/>
</dbReference>
<dbReference type="Pfam" id="PF00213">
    <property type="entry name" value="OSCP"/>
    <property type="match status" value="1"/>
</dbReference>
<dbReference type="PRINTS" id="PR00125">
    <property type="entry name" value="ATPASEDELTA"/>
</dbReference>
<dbReference type="SUPFAM" id="SSF47928">
    <property type="entry name" value="N-terminal domain of the delta subunit of the F1F0-ATP synthase"/>
    <property type="match status" value="1"/>
</dbReference>
<dbReference type="PROSITE" id="PS00389">
    <property type="entry name" value="ATPASE_DELTA"/>
    <property type="match status" value="1"/>
</dbReference>
<gene>
    <name evidence="1" type="primary">atpH</name>
    <name type="ordered locus">PMI3061</name>
</gene>
<evidence type="ECO:0000255" key="1">
    <source>
        <dbReference type="HAMAP-Rule" id="MF_01416"/>
    </source>
</evidence>
<accession>B4F0E4</accession>
<sequence length="177" mass="19518">MSEIATVARPYAKAAFDFAVENQAVDKWQVMLAFTAEVARNEQVTELLSGSLASEKLADIFIDLCGDQIDEHAQNLIRVMAENDRLSTLPEVLSQFIQLRAVLESTVDVEVTSAIELTKQQLANISAAMEKRLSRKVKLNCKIDKSVIAGMIIRAGDLVIDGSVRGRLERLTDVLQS</sequence>